<accession>Q08II6</accession>
<organismHost>
    <name type="scientific">Aves</name>
    <dbReference type="NCBI Taxonomy" id="8782"/>
</organismHost>
<organismHost>
    <name type="scientific">Equus caballus</name>
    <name type="common">Horse</name>
    <dbReference type="NCBI Taxonomy" id="9796"/>
</organismHost>
<name>PB2_I80A6</name>
<feature type="chain" id="PRO_0000279629" description="Polymerase basic protein 2">
    <location>
        <begin position="1"/>
        <end position="759"/>
    </location>
</feature>
<feature type="short sequence motif" description="Nuclear localization signal" evidence="1">
    <location>
        <begin position="736"/>
        <end position="739"/>
    </location>
</feature>
<feature type="site" description="Avian adaptation" evidence="1">
    <location>
        <position position="627"/>
    </location>
</feature>
<keyword id="KW-1157">Cap snatching</keyword>
<keyword id="KW-1262">Eukaryotic host gene expression shutoff by virus</keyword>
<keyword id="KW-1191">Eukaryotic host transcription shutoff by virus</keyword>
<keyword id="KW-1190">Host gene expression shutoff by virus</keyword>
<keyword id="KW-1048">Host nucleus</keyword>
<keyword id="KW-0945">Host-virus interaction</keyword>
<keyword id="KW-1104">Inhibition of host RNA polymerase II by virus</keyword>
<keyword id="KW-0506">mRNA capping</keyword>
<keyword id="KW-0507">mRNA processing</keyword>
<keyword id="KW-1195">Viral transcription</keyword>
<keyword id="KW-0946">Virion</keyword>
<sequence>MERIKELRDLMSQSRTREILTKTTVDHMAIIKKYTSGRQEKNPALRMKWMMAMKYPITADKRIMEMIPERNEQGQTLWSKTNDAGSDRVMVSPLAVTWWNRNGPTTSTVHYPKVYKTYFEKVERLKHGTFGPVHFRNQVKIRRRVDINPGHADLSAKEAQDVIMEVVFPNEVGARILTSESQLTITKEKKEELQDCKIAPLMVAYMLERELVRKTRFLPVAGGTSSVYIEVLHLTQGTCWEQMYTPGGEVRNDDVDQSLIIAARNIVRRATVSADPLASLLEMCHSTQIGGIRMVDILRQNPTEEQAVDICKAAMGLRISSSFSFGGFTFKRTSGSSVKREEEVLTGNLQTLKIRVHEGYEEFTMVGRRATAILRKATRRLIQLIVSGRDEQSIAEAIIVAMVFSQEDCMIKAVRGDLNFVNRANQRLNPMHQLLRHFQKDAKVLFQNWGIEPIDNVMGMIGILPDMTPSTEMSLRGVRVSKMGVDEYSSTERVVVSIDRFLRVRDQRGNVLLSPEEVSETQGTEKLTITYSSSMMWEINGPESVLVNTYQWIIRNWETVKIQWSQDPTMLYNKMEFEPFQSLVPKAARGQYSGFVRTLFQQMRDVLGTFDTVQIIKLLPFAAAPPEQSRMQFSSLTVNVRGSGMRILVRGNSPVFNYNKATKRLTVLGKDAGALTEDPDEGIAGVESAVLRGFLILGKEDKRYGPALSINELSNLAKGEKANVLIGQGDVVLVMKRKRDSSILTDSQTATKRIRMAIN</sequence>
<evidence type="ECO:0000255" key="1">
    <source>
        <dbReference type="HAMAP-Rule" id="MF_04062"/>
    </source>
</evidence>
<comment type="function">
    <text evidence="1">Plays an essential role in transcription initiation and cap-stealing mechanism, in which cellular capped pre-mRNAs are used to generate primers for viral transcription. Recognizes and binds the 7-methylguanosine-containing cap of the target pre-RNA which is subsequently cleaved after 10-13 nucleotides by the viral protein PA. Plays a role in the initiation of the viral genome replication and modulates the activity of the ribonucleoprotein (RNP) complex.</text>
</comment>
<comment type="subunit">
    <text evidence="1">Influenza RNA polymerase is composed of three subunits: PB1, PB2 and PA. Interacts (via N-terminus) with PB1 (via C-terminus). Interacts with nucleoprotein NP (via N-terminus).</text>
</comment>
<comment type="subcellular location">
    <subcellularLocation>
        <location evidence="1">Virion</location>
    </subcellularLocation>
    <subcellularLocation>
        <location evidence="1">Host nucleus</location>
    </subcellularLocation>
</comment>
<comment type="similarity">
    <text evidence="1">Belongs to the influenza viruses PB2 family.</text>
</comment>
<reference key="1">
    <citation type="submission" date="2006-09" db="EMBL/GenBank/DDBJ databases">
        <title>Evolutionary characterization of H3N8 viruses isolated from ducks in Hokkaido.</title>
        <authorList>
            <person name="Kida H."/>
            <person name="Sakoda Y."/>
        </authorList>
    </citation>
    <scope>NUCLEOTIDE SEQUENCE [GENOMIC RNA]</scope>
</reference>
<protein>
    <recommendedName>
        <fullName evidence="1">Polymerase basic protein 2</fullName>
    </recommendedName>
    <alternativeName>
        <fullName evidence="1">RNA-directed RNA polymerase subunit P3</fullName>
    </alternativeName>
</protein>
<organism>
    <name type="scientific">Influenza A virus (strain A/Duck/Hokkaido/8/1980 H3N8)</name>
    <dbReference type="NCBI Taxonomy" id="387207"/>
    <lineage>
        <taxon>Viruses</taxon>
        <taxon>Riboviria</taxon>
        <taxon>Orthornavirae</taxon>
        <taxon>Negarnaviricota</taxon>
        <taxon>Polyploviricotina</taxon>
        <taxon>Insthoviricetes</taxon>
        <taxon>Articulavirales</taxon>
        <taxon>Orthomyxoviridae</taxon>
        <taxon>Alphainfluenzavirus</taxon>
        <taxon>Alphainfluenzavirus influenzae</taxon>
        <taxon>Influenza A virus</taxon>
    </lineage>
</organism>
<proteinExistence type="inferred from homology"/>
<dbReference type="EMBL" id="AB274963">
    <property type="protein sequence ID" value="BAF32964.1"/>
    <property type="molecule type" value="Genomic_RNA"/>
</dbReference>
<dbReference type="SMR" id="Q08II6"/>
<dbReference type="PRO" id="PR:Q08II6"/>
<dbReference type="Proteomes" id="UP000008578">
    <property type="component" value="Genome"/>
</dbReference>
<dbReference type="GO" id="GO:0042025">
    <property type="term" value="C:host cell nucleus"/>
    <property type="evidence" value="ECO:0007669"/>
    <property type="project" value="UniProtKB-SubCell"/>
</dbReference>
<dbReference type="GO" id="GO:0044423">
    <property type="term" value="C:virion component"/>
    <property type="evidence" value="ECO:0007669"/>
    <property type="project" value="UniProtKB-UniRule"/>
</dbReference>
<dbReference type="GO" id="GO:0003723">
    <property type="term" value="F:RNA binding"/>
    <property type="evidence" value="ECO:0007669"/>
    <property type="project" value="UniProtKB-UniRule"/>
</dbReference>
<dbReference type="GO" id="GO:0003968">
    <property type="term" value="F:RNA-directed RNA polymerase activity"/>
    <property type="evidence" value="ECO:0007669"/>
    <property type="project" value="UniProtKB-UniRule"/>
</dbReference>
<dbReference type="GO" id="GO:0006370">
    <property type="term" value="P:7-methylguanosine mRNA capping"/>
    <property type="evidence" value="ECO:0007669"/>
    <property type="project" value="UniProtKB-UniRule"/>
</dbReference>
<dbReference type="GO" id="GO:0075526">
    <property type="term" value="P:cap snatching"/>
    <property type="evidence" value="ECO:0007669"/>
    <property type="project" value="UniProtKB-UniRule"/>
</dbReference>
<dbReference type="GO" id="GO:0006351">
    <property type="term" value="P:DNA-templated transcription"/>
    <property type="evidence" value="ECO:0007669"/>
    <property type="project" value="UniProtKB-UniRule"/>
</dbReference>
<dbReference type="GO" id="GO:0039657">
    <property type="term" value="P:symbiont-mediated suppression of host gene expression"/>
    <property type="evidence" value="ECO:0007669"/>
    <property type="project" value="UniProtKB-KW"/>
</dbReference>
<dbReference type="GO" id="GO:0039523">
    <property type="term" value="P:symbiont-mediated suppression of host mRNA transcription via inhibition of RNA polymerase II activity"/>
    <property type="evidence" value="ECO:0007669"/>
    <property type="project" value="UniProtKB-UniRule"/>
</dbReference>
<dbReference type="GO" id="GO:0039694">
    <property type="term" value="P:viral RNA genome replication"/>
    <property type="evidence" value="ECO:0007669"/>
    <property type="project" value="InterPro"/>
</dbReference>
<dbReference type="FunFam" id="3.30.30.90:FF:000001">
    <property type="entry name" value="Polymerase basic protein 2"/>
    <property type="match status" value="1"/>
</dbReference>
<dbReference type="Gene3D" id="3.30.30.90">
    <property type="entry name" value="Polymerase Basic Protein 2, C-terminal domain"/>
    <property type="match status" value="1"/>
</dbReference>
<dbReference type="HAMAP" id="MF_04062">
    <property type="entry name" value="INV_PB2"/>
    <property type="match status" value="1"/>
</dbReference>
<dbReference type="InterPro" id="IPR049110">
    <property type="entry name" value="Flu_PB2_2nd"/>
</dbReference>
<dbReference type="InterPro" id="IPR049114">
    <property type="entry name" value="Flu_PB2_6th"/>
</dbReference>
<dbReference type="InterPro" id="IPR049115">
    <property type="entry name" value="Flu_PB2_C"/>
</dbReference>
<dbReference type="InterPro" id="IPR048298">
    <property type="entry name" value="Flu_PB2_CAP-bd"/>
</dbReference>
<dbReference type="InterPro" id="IPR049111">
    <property type="entry name" value="Flu_PB2_middle"/>
</dbReference>
<dbReference type="InterPro" id="IPR049106">
    <property type="entry name" value="Flu_PB2_N"/>
</dbReference>
<dbReference type="InterPro" id="IPR001591">
    <property type="entry name" value="INV_PB2"/>
</dbReference>
<dbReference type="InterPro" id="IPR049113">
    <property type="entry name" value="PB2_helical"/>
</dbReference>
<dbReference type="InterPro" id="IPR037258">
    <property type="entry name" value="PDB2_C"/>
</dbReference>
<dbReference type="Pfam" id="PF20947">
    <property type="entry name" value="Flu_PB2_1st"/>
    <property type="match status" value="1"/>
</dbReference>
<dbReference type="Pfam" id="PF20948">
    <property type="entry name" value="Flu_PB2_2nd"/>
    <property type="match status" value="1"/>
</dbReference>
<dbReference type="Pfam" id="PF20949">
    <property type="entry name" value="Flu_PB2_3rd"/>
    <property type="match status" value="1"/>
</dbReference>
<dbReference type="Pfam" id="PF20950">
    <property type="entry name" value="Flu_PB2_4th"/>
    <property type="match status" value="1"/>
</dbReference>
<dbReference type="Pfam" id="PF00604">
    <property type="entry name" value="Flu_PB2_5th"/>
    <property type="match status" value="1"/>
</dbReference>
<dbReference type="Pfam" id="PF20951">
    <property type="entry name" value="Flu_PB2_6th"/>
    <property type="match status" value="1"/>
</dbReference>
<dbReference type="Pfam" id="PF20952">
    <property type="entry name" value="Flu_PB2_7th"/>
    <property type="match status" value="1"/>
</dbReference>
<dbReference type="SUPFAM" id="SSF160453">
    <property type="entry name" value="PB2 C-terminal domain-like"/>
    <property type="match status" value="1"/>
</dbReference>
<gene>
    <name evidence="1" type="primary">PB2</name>
</gene>